<organism>
    <name type="scientific">Populus trichocarpa</name>
    <name type="common">Western balsam poplar</name>
    <name type="synonym">Populus balsamifera subsp. trichocarpa</name>
    <dbReference type="NCBI Taxonomy" id="3694"/>
    <lineage>
        <taxon>Eukaryota</taxon>
        <taxon>Viridiplantae</taxon>
        <taxon>Streptophyta</taxon>
        <taxon>Embryophyta</taxon>
        <taxon>Tracheophyta</taxon>
        <taxon>Spermatophyta</taxon>
        <taxon>Magnoliopsida</taxon>
        <taxon>eudicotyledons</taxon>
        <taxon>Gunneridae</taxon>
        <taxon>Pentapetalae</taxon>
        <taxon>rosids</taxon>
        <taxon>fabids</taxon>
        <taxon>Malpighiales</taxon>
        <taxon>Salicaceae</taxon>
        <taxon>Saliceae</taxon>
        <taxon>Populus</taxon>
    </lineage>
</organism>
<name>MAOX_POPTR</name>
<keyword id="KW-0963">Cytoplasm</keyword>
<keyword id="KW-0479">Metal-binding</keyword>
<keyword id="KW-0521">NADP</keyword>
<keyword id="KW-0560">Oxidoreductase</keyword>
<feature type="chain" id="PRO_0000160203" description="NADP-dependent malic enzyme">
    <location>
        <begin position="1"/>
        <end position="591"/>
    </location>
</feature>
<feature type="region of interest" description="Disordered" evidence="2">
    <location>
        <begin position="1"/>
        <end position="26"/>
    </location>
</feature>
<feature type="compositionally biased region" description="Basic and acidic residues" evidence="2">
    <location>
        <begin position="1"/>
        <end position="10"/>
    </location>
</feature>
<feature type="active site" description="Proton donor" evidence="1">
    <location>
        <position position="139"/>
    </location>
</feature>
<feature type="active site" description="Proton acceptor" evidence="1">
    <location>
        <position position="210"/>
    </location>
</feature>
<feature type="binding site" evidence="1">
    <location>
        <position position="192"/>
    </location>
    <ligand>
        <name>NAD(+)</name>
        <dbReference type="ChEBI" id="CHEBI:57540"/>
    </ligand>
</feature>
<feature type="binding site" evidence="1">
    <location>
        <position position="282"/>
    </location>
    <ligand>
        <name>a divalent metal cation</name>
        <dbReference type="ChEBI" id="CHEBI:60240"/>
    </ligand>
</feature>
<feature type="binding site" evidence="1">
    <location>
        <position position="283"/>
    </location>
    <ligand>
        <name>a divalent metal cation</name>
        <dbReference type="ChEBI" id="CHEBI:60240"/>
    </ligand>
</feature>
<feature type="binding site" evidence="1">
    <location>
        <position position="306"/>
    </location>
    <ligand>
        <name>a divalent metal cation</name>
        <dbReference type="ChEBI" id="CHEBI:60240"/>
    </ligand>
</feature>
<feature type="binding site" evidence="1">
    <location>
        <position position="306"/>
    </location>
    <ligand>
        <name>NAD(+)</name>
        <dbReference type="ChEBI" id="CHEBI:57540"/>
    </ligand>
</feature>
<feature type="binding site" evidence="1">
    <location>
        <begin position="335"/>
        <end position="351"/>
    </location>
    <ligand>
        <name>NADP(+)</name>
        <dbReference type="ChEBI" id="CHEBI:58349"/>
    </ligand>
</feature>
<feature type="binding site" evidence="1">
    <location>
        <position position="447"/>
    </location>
    <ligand>
        <name>NAD(+)</name>
        <dbReference type="ChEBI" id="CHEBI:57540"/>
    </ligand>
</feature>
<feature type="site" description="Important for activity" evidence="1">
    <location>
        <position position="306"/>
    </location>
</feature>
<sequence>MESTLKEMRDGASVLDMDPKSTVGGGVEDVYGEDRATEDQLVTPWTISVASGYTLLRDPHHNKGLAFTEKERDAHYLRGLLPPTTISQQLQEKKLMNTIRQYQLPLQKYTAMMELEERNERLFYKLLIDNVEELLPVVYTPTVGEACQKYGSIFKRPQGLYISLKEKGKVLDVLKNWPQKSIQVIVVTDGERILGLGDLGCQGIGIPVGKLSLYTALGGVRPSACLPVTIDVGTNNEQLLKDEFYIGLRQRRATGQEYSELLHEFMTAVKQNYGEKVLIQFEDFANHNAFDLLAKYGTTHLVFNDDIQGTAAVVLAGLISALKLLGGSLADHTFLFLGAGEAGTGIAELIALEMSRRSKTPLEETRKKIWLTDSKGLIVSSRKESLQHFKKPWAHEHEPVKGLLEVVKAIKPIVLIGTSGVGKTFTKEVIEAMASFNEKPLILALSNPTSQSECTAQEAYTWTKGKAIFASGSPFDPVEYEGKVFVPGQSNNAYIFPGLGLGLVISGAIRVHDDMLLAAAEALAGQIKEEYLAKGLIYPPLSNIRKISVQIAANVAAKAYELGLATRLPRPENLVKHAESCMYSPAYRYYR</sequence>
<proteinExistence type="evidence at transcript level"/>
<comment type="catalytic activity">
    <reaction>
        <text>(S)-malate + NADP(+) = pyruvate + CO2 + NADPH</text>
        <dbReference type="Rhea" id="RHEA:18253"/>
        <dbReference type="ChEBI" id="CHEBI:15361"/>
        <dbReference type="ChEBI" id="CHEBI:15589"/>
        <dbReference type="ChEBI" id="CHEBI:16526"/>
        <dbReference type="ChEBI" id="CHEBI:57783"/>
        <dbReference type="ChEBI" id="CHEBI:58349"/>
        <dbReference type="EC" id="1.1.1.40"/>
    </reaction>
</comment>
<comment type="catalytic activity">
    <reaction>
        <text>oxaloacetate + H(+) = pyruvate + CO2</text>
        <dbReference type="Rhea" id="RHEA:15641"/>
        <dbReference type="ChEBI" id="CHEBI:15361"/>
        <dbReference type="ChEBI" id="CHEBI:15378"/>
        <dbReference type="ChEBI" id="CHEBI:16452"/>
        <dbReference type="ChEBI" id="CHEBI:16526"/>
        <dbReference type="EC" id="1.1.1.40"/>
    </reaction>
</comment>
<comment type="cofactor">
    <cofactor evidence="1">
        <name>Mg(2+)</name>
        <dbReference type="ChEBI" id="CHEBI:18420"/>
    </cofactor>
    <cofactor evidence="1">
        <name>Mn(2+)</name>
        <dbReference type="ChEBI" id="CHEBI:29035"/>
    </cofactor>
    <text evidence="1">Divalent metal cations. Prefers magnesium or manganese.</text>
</comment>
<comment type="subunit">
    <text evidence="1">Homotetramer.</text>
</comment>
<comment type="subcellular location">
    <subcellularLocation>
        <location evidence="3">Cytoplasm</location>
    </subcellularLocation>
</comment>
<comment type="tissue specificity">
    <text>mRNA found twofold higher in leaves and stems than in roots.</text>
</comment>
<comment type="similarity">
    <text evidence="3">Belongs to the malic enzymes family.</text>
</comment>
<protein>
    <recommendedName>
        <fullName>NADP-dependent malic enzyme</fullName>
        <shortName>NADP-ME</shortName>
        <ecNumber>1.1.1.40</ecNumber>
    </recommendedName>
</protein>
<dbReference type="EC" id="1.1.1.40"/>
<dbReference type="EMBL" id="X56233">
    <property type="protein sequence ID" value="CAA39690.1"/>
    <property type="molecule type" value="mRNA"/>
</dbReference>
<dbReference type="PIR" id="S18826">
    <property type="entry name" value="S18826"/>
</dbReference>
<dbReference type="SMR" id="P34105"/>
<dbReference type="eggNOG" id="KOG1257">
    <property type="taxonomic scope" value="Eukaryota"/>
</dbReference>
<dbReference type="ExpressionAtlas" id="P34105">
    <property type="expression patterns" value="baseline"/>
</dbReference>
<dbReference type="GO" id="GO:0005737">
    <property type="term" value="C:cytoplasm"/>
    <property type="evidence" value="ECO:0007669"/>
    <property type="project" value="UniProtKB-SubCell"/>
</dbReference>
<dbReference type="GO" id="GO:0004473">
    <property type="term" value="F:malate dehydrogenase (decarboxylating) (NADP+) activity"/>
    <property type="evidence" value="ECO:0007669"/>
    <property type="project" value="UniProtKB-EC"/>
</dbReference>
<dbReference type="GO" id="GO:0046872">
    <property type="term" value="F:metal ion binding"/>
    <property type="evidence" value="ECO:0007669"/>
    <property type="project" value="UniProtKB-KW"/>
</dbReference>
<dbReference type="GO" id="GO:0051287">
    <property type="term" value="F:NAD binding"/>
    <property type="evidence" value="ECO:0007669"/>
    <property type="project" value="InterPro"/>
</dbReference>
<dbReference type="GO" id="GO:0008948">
    <property type="term" value="F:oxaloacetate decarboxylase activity"/>
    <property type="evidence" value="ECO:0007669"/>
    <property type="project" value="RHEA"/>
</dbReference>
<dbReference type="GO" id="GO:0006108">
    <property type="term" value="P:malate metabolic process"/>
    <property type="evidence" value="ECO:0007669"/>
    <property type="project" value="UniProtKB-ARBA"/>
</dbReference>
<dbReference type="CDD" id="cd05312">
    <property type="entry name" value="NAD_bind_1_malic_enz"/>
    <property type="match status" value="1"/>
</dbReference>
<dbReference type="FunFam" id="3.40.50.10380:FF:000002">
    <property type="entry name" value="Malic enzyme"/>
    <property type="match status" value="1"/>
</dbReference>
<dbReference type="FunFam" id="3.40.50.720:FF:000067">
    <property type="entry name" value="Malic enzyme"/>
    <property type="match status" value="1"/>
</dbReference>
<dbReference type="Gene3D" id="3.40.50.10380">
    <property type="entry name" value="Malic enzyme, N-terminal domain"/>
    <property type="match status" value="1"/>
</dbReference>
<dbReference type="Gene3D" id="3.40.50.720">
    <property type="entry name" value="NAD(P)-binding Rossmann-like Domain"/>
    <property type="match status" value="1"/>
</dbReference>
<dbReference type="InterPro" id="IPR046346">
    <property type="entry name" value="Aminoacid_DH-like_N_sf"/>
</dbReference>
<dbReference type="InterPro" id="IPR015884">
    <property type="entry name" value="Malic_enzyme_CS"/>
</dbReference>
<dbReference type="InterPro" id="IPR012301">
    <property type="entry name" value="Malic_N_dom"/>
</dbReference>
<dbReference type="InterPro" id="IPR037062">
    <property type="entry name" value="Malic_N_dom_sf"/>
</dbReference>
<dbReference type="InterPro" id="IPR012302">
    <property type="entry name" value="Malic_NAD-bd"/>
</dbReference>
<dbReference type="InterPro" id="IPR001891">
    <property type="entry name" value="Malic_OxRdtase"/>
</dbReference>
<dbReference type="InterPro" id="IPR036291">
    <property type="entry name" value="NAD(P)-bd_dom_sf"/>
</dbReference>
<dbReference type="NCBIfam" id="NF010052">
    <property type="entry name" value="PRK13529.1"/>
    <property type="match status" value="1"/>
</dbReference>
<dbReference type="PANTHER" id="PTHR23406">
    <property type="entry name" value="MALIC ENZYME-RELATED"/>
    <property type="match status" value="1"/>
</dbReference>
<dbReference type="PANTHER" id="PTHR23406:SF89">
    <property type="entry name" value="NADP-DEPENDENT MALIC ENZYME 1"/>
    <property type="match status" value="1"/>
</dbReference>
<dbReference type="Pfam" id="PF00390">
    <property type="entry name" value="malic"/>
    <property type="match status" value="1"/>
</dbReference>
<dbReference type="Pfam" id="PF03949">
    <property type="entry name" value="Malic_M"/>
    <property type="match status" value="1"/>
</dbReference>
<dbReference type="PIRSF" id="PIRSF000106">
    <property type="entry name" value="ME"/>
    <property type="match status" value="1"/>
</dbReference>
<dbReference type="PRINTS" id="PR00072">
    <property type="entry name" value="MALOXRDTASE"/>
</dbReference>
<dbReference type="SMART" id="SM01274">
    <property type="entry name" value="malic"/>
    <property type="match status" value="1"/>
</dbReference>
<dbReference type="SMART" id="SM00919">
    <property type="entry name" value="Malic_M"/>
    <property type="match status" value="1"/>
</dbReference>
<dbReference type="SUPFAM" id="SSF53223">
    <property type="entry name" value="Aminoacid dehydrogenase-like, N-terminal domain"/>
    <property type="match status" value="1"/>
</dbReference>
<dbReference type="SUPFAM" id="SSF51735">
    <property type="entry name" value="NAD(P)-binding Rossmann-fold domains"/>
    <property type="match status" value="1"/>
</dbReference>
<dbReference type="PROSITE" id="PS00331">
    <property type="entry name" value="MALIC_ENZYMES"/>
    <property type="match status" value="1"/>
</dbReference>
<accession>P34105</accession>
<evidence type="ECO:0000250" key="1"/>
<evidence type="ECO:0000256" key="2">
    <source>
        <dbReference type="SAM" id="MobiDB-lite"/>
    </source>
</evidence>
<evidence type="ECO:0000305" key="3"/>
<reference key="1">
    <citation type="journal article" date="1991" name="Plant Physiol.">
        <title>Nucleotide sequence of a cDNA encoding malic enzyme from poplar.</title>
        <authorList>
            <person name="van Doorsselaere J."/>
            <person name="Villarroel R."/>
            <person name="van Montagu M."/>
            <person name="Inze D."/>
        </authorList>
    </citation>
    <scope>NUCLEOTIDE SEQUENCE [MRNA]</scope>
    <source>
        <tissue>Leaf</tissue>
    </source>
</reference>